<protein>
    <recommendedName>
        <fullName evidence="1">Inorganic pyrophosphatase</fullName>
        <ecNumber evidence="1">3.6.1.1</ecNumber>
    </recommendedName>
    <alternativeName>
        <fullName evidence="1">Pyrophosphate phospho-hydrolase</fullName>
        <shortName evidence="1">PPase</shortName>
    </alternativeName>
</protein>
<organism>
    <name type="scientific">Vibrio vulnificus (strain CMCP6)</name>
    <dbReference type="NCBI Taxonomy" id="216895"/>
    <lineage>
        <taxon>Bacteria</taxon>
        <taxon>Pseudomonadati</taxon>
        <taxon>Pseudomonadota</taxon>
        <taxon>Gammaproteobacteria</taxon>
        <taxon>Vibrionales</taxon>
        <taxon>Vibrionaceae</taxon>
        <taxon>Vibrio</taxon>
    </lineage>
</organism>
<keyword id="KW-0963">Cytoplasm</keyword>
<keyword id="KW-0378">Hydrolase</keyword>
<keyword id="KW-0460">Magnesium</keyword>
<keyword id="KW-0479">Metal-binding</keyword>
<sequence>MSLNNVPAGKSLPDDLYVVIEIPANADPIKYEVDKESGAVFVDRFMSAPMFYPCNYGYVNHTLSLDGDPVDVLVPTPYPLMPGSVIRCRPVGVLKMTDESGEDAKVVAVPHSKLSKEYDHIQDVNDLPELLKAQITHFFERYKELESGKWVKVDGWEDVEAARKEILDSYQRAQNK</sequence>
<feature type="chain" id="PRO_0000137539" description="Inorganic pyrophosphatase">
    <location>
        <begin position="1"/>
        <end position="176"/>
    </location>
</feature>
<feature type="binding site" evidence="1">
    <location>
        <position position="30"/>
    </location>
    <ligand>
        <name>substrate</name>
    </ligand>
</feature>
<feature type="binding site" evidence="1">
    <location>
        <position position="44"/>
    </location>
    <ligand>
        <name>substrate</name>
    </ligand>
</feature>
<feature type="binding site" evidence="1">
    <location>
        <position position="56"/>
    </location>
    <ligand>
        <name>substrate</name>
    </ligand>
</feature>
<feature type="binding site" evidence="1">
    <location>
        <position position="66"/>
    </location>
    <ligand>
        <name>Mg(2+)</name>
        <dbReference type="ChEBI" id="CHEBI:18420"/>
        <label>1</label>
    </ligand>
</feature>
<feature type="binding site" evidence="1">
    <location>
        <position position="71"/>
    </location>
    <ligand>
        <name>Mg(2+)</name>
        <dbReference type="ChEBI" id="CHEBI:18420"/>
        <label>1</label>
    </ligand>
</feature>
<feature type="binding site" evidence="1">
    <location>
        <position position="71"/>
    </location>
    <ligand>
        <name>Mg(2+)</name>
        <dbReference type="ChEBI" id="CHEBI:18420"/>
        <label>2</label>
    </ligand>
</feature>
<feature type="binding site" evidence="1">
    <location>
        <position position="103"/>
    </location>
    <ligand>
        <name>Mg(2+)</name>
        <dbReference type="ChEBI" id="CHEBI:18420"/>
        <label>1</label>
    </ligand>
</feature>
<feature type="binding site" evidence="1">
    <location>
        <position position="142"/>
    </location>
    <ligand>
        <name>substrate</name>
    </ligand>
</feature>
<reference key="1">
    <citation type="submission" date="2002-12" db="EMBL/GenBank/DDBJ databases">
        <title>Complete genome sequence of Vibrio vulnificus CMCP6.</title>
        <authorList>
            <person name="Rhee J.H."/>
            <person name="Kim S.Y."/>
            <person name="Chung S.S."/>
            <person name="Kim J.J."/>
            <person name="Moon Y.H."/>
            <person name="Jeong H."/>
            <person name="Choy H.E."/>
        </authorList>
    </citation>
    <scope>NUCLEOTIDE SEQUENCE [LARGE SCALE GENOMIC DNA]</scope>
    <source>
        <strain>CMCP6</strain>
    </source>
</reference>
<dbReference type="EC" id="3.6.1.1" evidence="1"/>
<dbReference type="EMBL" id="AE016795">
    <property type="protein sequence ID" value="AAO09218.1"/>
    <property type="molecule type" value="Genomic_DNA"/>
</dbReference>
<dbReference type="RefSeq" id="WP_011078784.1">
    <property type="nucleotide sequence ID" value="NC_004459.3"/>
</dbReference>
<dbReference type="SMR" id="Q8DE89"/>
<dbReference type="KEGG" id="vvu:VV1_0708"/>
<dbReference type="HOGENOM" id="CLU_073198_1_0_6"/>
<dbReference type="Proteomes" id="UP000002275">
    <property type="component" value="Chromosome 1"/>
</dbReference>
<dbReference type="GO" id="GO:0005737">
    <property type="term" value="C:cytoplasm"/>
    <property type="evidence" value="ECO:0007669"/>
    <property type="project" value="UniProtKB-SubCell"/>
</dbReference>
<dbReference type="GO" id="GO:0004427">
    <property type="term" value="F:inorganic diphosphate phosphatase activity"/>
    <property type="evidence" value="ECO:0007669"/>
    <property type="project" value="UniProtKB-UniRule"/>
</dbReference>
<dbReference type="GO" id="GO:0000287">
    <property type="term" value="F:magnesium ion binding"/>
    <property type="evidence" value="ECO:0007669"/>
    <property type="project" value="UniProtKB-UniRule"/>
</dbReference>
<dbReference type="GO" id="GO:0006796">
    <property type="term" value="P:phosphate-containing compound metabolic process"/>
    <property type="evidence" value="ECO:0007669"/>
    <property type="project" value="InterPro"/>
</dbReference>
<dbReference type="CDD" id="cd00412">
    <property type="entry name" value="pyrophosphatase"/>
    <property type="match status" value="1"/>
</dbReference>
<dbReference type="FunFam" id="3.90.80.10:FF:000001">
    <property type="entry name" value="Inorganic pyrophosphatase"/>
    <property type="match status" value="1"/>
</dbReference>
<dbReference type="Gene3D" id="3.90.80.10">
    <property type="entry name" value="Inorganic pyrophosphatase"/>
    <property type="match status" value="1"/>
</dbReference>
<dbReference type="HAMAP" id="MF_00209">
    <property type="entry name" value="Inorganic_PPase"/>
    <property type="match status" value="1"/>
</dbReference>
<dbReference type="InterPro" id="IPR008162">
    <property type="entry name" value="Pyrophosphatase"/>
</dbReference>
<dbReference type="InterPro" id="IPR036649">
    <property type="entry name" value="Pyrophosphatase_sf"/>
</dbReference>
<dbReference type="NCBIfam" id="NF002317">
    <property type="entry name" value="PRK01250.1"/>
    <property type="match status" value="1"/>
</dbReference>
<dbReference type="PANTHER" id="PTHR10286">
    <property type="entry name" value="INORGANIC PYROPHOSPHATASE"/>
    <property type="match status" value="1"/>
</dbReference>
<dbReference type="Pfam" id="PF00719">
    <property type="entry name" value="Pyrophosphatase"/>
    <property type="match status" value="1"/>
</dbReference>
<dbReference type="SUPFAM" id="SSF50324">
    <property type="entry name" value="Inorganic pyrophosphatase"/>
    <property type="match status" value="1"/>
</dbReference>
<dbReference type="PROSITE" id="PS00387">
    <property type="entry name" value="PPASE"/>
    <property type="match status" value="1"/>
</dbReference>
<proteinExistence type="inferred from homology"/>
<comment type="function">
    <text evidence="1">Catalyzes the hydrolysis of inorganic pyrophosphate (PPi) forming two phosphate ions.</text>
</comment>
<comment type="catalytic activity">
    <reaction evidence="1">
        <text>diphosphate + H2O = 2 phosphate + H(+)</text>
        <dbReference type="Rhea" id="RHEA:24576"/>
        <dbReference type="ChEBI" id="CHEBI:15377"/>
        <dbReference type="ChEBI" id="CHEBI:15378"/>
        <dbReference type="ChEBI" id="CHEBI:33019"/>
        <dbReference type="ChEBI" id="CHEBI:43474"/>
        <dbReference type="EC" id="3.6.1.1"/>
    </reaction>
</comment>
<comment type="cofactor">
    <cofactor evidence="1">
        <name>Mg(2+)</name>
        <dbReference type="ChEBI" id="CHEBI:18420"/>
    </cofactor>
</comment>
<comment type="subunit">
    <text evidence="1">Homohexamer.</text>
</comment>
<comment type="subcellular location">
    <subcellularLocation>
        <location evidence="1">Cytoplasm</location>
    </subcellularLocation>
</comment>
<comment type="similarity">
    <text evidence="1">Belongs to the PPase family.</text>
</comment>
<gene>
    <name evidence="1" type="primary">ppa</name>
    <name type="ordered locus">VV1_0708</name>
</gene>
<accession>Q8DE89</accession>
<name>IPYR_VIBVU</name>
<evidence type="ECO:0000255" key="1">
    <source>
        <dbReference type="HAMAP-Rule" id="MF_00209"/>
    </source>
</evidence>